<name>MOAA3_MYCBO</name>
<evidence type="ECO:0000255" key="1">
    <source>
        <dbReference type="HAMAP-Rule" id="MF_01225"/>
    </source>
</evidence>
<evidence type="ECO:0000255" key="2">
    <source>
        <dbReference type="PROSITE-ProRule" id="PRU01266"/>
    </source>
</evidence>
<evidence type="ECO:0000305" key="3"/>
<sequence>MTRVFHPALSGPEQSRYQITDVASVSRSGLCINESPIRDRCGRTMGDLRLSVIDQCNLRCRYCMPEAEYAWLPRADLLSVDEISLIVDAFIAVGVDKIRLTGGEPLIRSDLAAIIEVISAKVGDGSGLQDLAITTNGVLLADQARKLKSAGMRRITISLDTLRPDRFKAISQRGTHYKVIEGIEAVAAAGFTDTKLDSVVIRGFNDDELSDLIEFARNVNAEVRFIEYMDVGGATQWSMDKVFTKAQMLSTLGKKYGPIAALPKYDSAPANRYRLPDGTTFGIIASTTEPFCATCDRSRLTADGIWLHCLYALSGINLRESVRAGASANDVVQILQRGWRDRANRGAEQRLAQRTRQVFLPVSRLKRDPHLEMHTRGG</sequence>
<feature type="chain" id="PRO_0000152975" description="GTP 3',8-cyclase 3">
    <location>
        <begin position="1"/>
        <end position="378"/>
    </location>
</feature>
<feature type="domain" description="Radical SAM core" evidence="2">
    <location>
        <begin position="40"/>
        <end position="259"/>
    </location>
</feature>
<feature type="binding site" evidence="1">
    <location>
        <position position="49"/>
    </location>
    <ligand>
        <name>GTP</name>
        <dbReference type="ChEBI" id="CHEBI:37565"/>
    </ligand>
</feature>
<feature type="binding site" evidence="1">
    <location>
        <position position="56"/>
    </location>
    <ligand>
        <name>[4Fe-4S] cluster</name>
        <dbReference type="ChEBI" id="CHEBI:49883"/>
        <label>1</label>
        <note>4Fe-4S-S-AdoMet</note>
    </ligand>
</feature>
<feature type="binding site" evidence="1">
    <location>
        <position position="60"/>
    </location>
    <ligand>
        <name>[4Fe-4S] cluster</name>
        <dbReference type="ChEBI" id="CHEBI:49883"/>
        <label>1</label>
        <note>4Fe-4S-S-AdoMet</note>
    </ligand>
</feature>
<feature type="binding site" evidence="1">
    <location>
        <position position="62"/>
    </location>
    <ligand>
        <name>S-adenosyl-L-methionine</name>
        <dbReference type="ChEBI" id="CHEBI:59789"/>
    </ligand>
</feature>
<feature type="binding site" evidence="1">
    <location>
        <position position="63"/>
    </location>
    <ligand>
        <name>[4Fe-4S] cluster</name>
        <dbReference type="ChEBI" id="CHEBI:49883"/>
        <label>1</label>
        <note>4Fe-4S-S-AdoMet</note>
    </ligand>
</feature>
<feature type="binding site" evidence="1">
    <location>
        <position position="99"/>
    </location>
    <ligand>
        <name>GTP</name>
        <dbReference type="ChEBI" id="CHEBI:37565"/>
    </ligand>
</feature>
<feature type="binding site" evidence="1">
    <location>
        <position position="103"/>
    </location>
    <ligand>
        <name>S-adenosyl-L-methionine</name>
        <dbReference type="ChEBI" id="CHEBI:59789"/>
    </ligand>
</feature>
<feature type="binding site" evidence="1">
    <location>
        <position position="134"/>
    </location>
    <ligand>
        <name>GTP</name>
        <dbReference type="ChEBI" id="CHEBI:37565"/>
    </ligand>
</feature>
<feature type="binding site" evidence="1">
    <location>
        <position position="158"/>
    </location>
    <ligand>
        <name>S-adenosyl-L-methionine</name>
        <dbReference type="ChEBI" id="CHEBI:59789"/>
    </ligand>
</feature>
<feature type="binding site" evidence="1">
    <location>
        <position position="195"/>
    </location>
    <ligand>
        <name>GTP</name>
        <dbReference type="ChEBI" id="CHEBI:37565"/>
    </ligand>
</feature>
<feature type="binding site" evidence="1">
    <location>
        <position position="229"/>
    </location>
    <ligand>
        <name>S-adenosyl-L-methionine</name>
        <dbReference type="ChEBI" id="CHEBI:59789"/>
    </ligand>
</feature>
<feature type="binding site" evidence="1">
    <location>
        <position position="292"/>
    </location>
    <ligand>
        <name>[4Fe-4S] cluster</name>
        <dbReference type="ChEBI" id="CHEBI:49883"/>
        <label>2</label>
        <note>4Fe-4S-substrate</note>
    </ligand>
</feature>
<feature type="binding site" evidence="1">
    <location>
        <position position="295"/>
    </location>
    <ligand>
        <name>[4Fe-4S] cluster</name>
        <dbReference type="ChEBI" id="CHEBI:49883"/>
        <label>2</label>
        <note>4Fe-4S-substrate</note>
    </ligand>
</feature>
<feature type="binding site" evidence="1">
    <location>
        <begin position="297"/>
        <end position="299"/>
    </location>
    <ligand>
        <name>GTP</name>
        <dbReference type="ChEBI" id="CHEBI:37565"/>
    </ligand>
</feature>
<feature type="binding site" evidence="1">
    <location>
        <position position="309"/>
    </location>
    <ligand>
        <name>[4Fe-4S] cluster</name>
        <dbReference type="ChEBI" id="CHEBI:49883"/>
        <label>2</label>
        <note>4Fe-4S-substrate</note>
    </ligand>
</feature>
<accession>P62588</accession>
<accession>A0A1R3Y3T2</accession>
<accession>O53143</accession>
<accession>X2BMW0</accession>
<proteinExistence type="inferred from homology"/>
<keyword id="KW-0004">4Fe-4S</keyword>
<keyword id="KW-0342">GTP-binding</keyword>
<keyword id="KW-0408">Iron</keyword>
<keyword id="KW-0411">Iron-sulfur</keyword>
<keyword id="KW-0456">Lyase</keyword>
<keyword id="KW-0479">Metal-binding</keyword>
<keyword id="KW-0501">Molybdenum cofactor biosynthesis</keyword>
<keyword id="KW-0547">Nucleotide-binding</keyword>
<keyword id="KW-1185">Reference proteome</keyword>
<keyword id="KW-0949">S-adenosyl-L-methionine</keyword>
<organism>
    <name type="scientific">Mycobacterium bovis (strain ATCC BAA-935 / AF2122/97)</name>
    <dbReference type="NCBI Taxonomy" id="233413"/>
    <lineage>
        <taxon>Bacteria</taxon>
        <taxon>Bacillati</taxon>
        <taxon>Actinomycetota</taxon>
        <taxon>Actinomycetes</taxon>
        <taxon>Mycobacteriales</taxon>
        <taxon>Mycobacteriaceae</taxon>
        <taxon>Mycobacterium</taxon>
        <taxon>Mycobacterium tuberculosis complex</taxon>
    </lineage>
</organism>
<protein>
    <recommendedName>
        <fullName evidence="1">GTP 3',8-cyclase 3</fullName>
        <ecNumber evidence="1">4.1.99.22</ecNumber>
    </recommendedName>
    <alternativeName>
        <fullName evidence="1">Molybdenum cofactor biosynthesis protein A 3</fullName>
    </alternativeName>
</protein>
<gene>
    <name evidence="1" type="primary">moaA3</name>
    <name type="ordered locus">BQ2027_MB3355C</name>
</gene>
<reference key="1">
    <citation type="journal article" date="2003" name="Proc. Natl. Acad. Sci. U.S.A.">
        <title>The complete genome sequence of Mycobacterium bovis.</title>
        <authorList>
            <person name="Garnier T."/>
            <person name="Eiglmeier K."/>
            <person name="Camus J.-C."/>
            <person name="Medina N."/>
            <person name="Mansoor H."/>
            <person name="Pryor M."/>
            <person name="Duthoy S."/>
            <person name="Grondin S."/>
            <person name="Lacroix C."/>
            <person name="Monsempe C."/>
            <person name="Simon S."/>
            <person name="Harris B."/>
            <person name="Atkin R."/>
            <person name="Doggett J."/>
            <person name="Mayes R."/>
            <person name="Keating L."/>
            <person name="Wheeler P.R."/>
            <person name="Parkhill J."/>
            <person name="Barrell B.G."/>
            <person name="Cole S.T."/>
            <person name="Gordon S.V."/>
            <person name="Hewinson R.G."/>
        </authorList>
    </citation>
    <scope>NUCLEOTIDE SEQUENCE [LARGE SCALE GENOMIC DNA]</scope>
    <source>
        <strain>ATCC BAA-935 / AF2122/97</strain>
    </source>
</reference>
<reference key="2">
    <citation type="journal article" date="2017" name="Genome Announc.">
        <title>Updated reference genome sequence and annotation of Mycobacterium bovis AF2122/97.</title>
        <authorList>
            <person name="Malone K.M."/>
            <person name="Farrell D."/>
            <person name="Stuber T.P."/>
            <person name="Schubert O.T."/>
            <person name="Aebersold R."/>
            <person name="Robbe-Austerman S."/>
            <person name="Gordon S.V."/>
        </authorList>
    </citation>
    <scope>NUCLEOTIDE SEQUENCE [LARGE SCALE GENOMIC DNA]</scope>
    <scope>GENOME REANNOTATION</scope>
    <source>
        <strain>ATCC BAA-935 / AF2122/97</strain>
    </source>
</reference>
<comment type="function">
    <text evidence="1">Catalyzes the cyclization of GTP to (8S)-3',8-cyclo-7,8-dihydroguanosine 5'-triphosphate.</text>
</comment>
<comment type="catalytic activity">
    <reaction evidence="1">
        <text>GTP + AH2 + S-adenosyl-L-methionine = (8S)-3',8-cyclo-7,8-dihydroguanosine 5'-triphosphate + 5'-deoxyadenosine + L-methionine + A + H(+)</text>
        <dbReference type="Rhea" id="RHEA:49576"/>
        <dbReference type="ChEBI" id="CHEBI:13193"/>
        <dbReference type="ChEBI" id="CHEBI:15378"/>
        <dbReference type="ChEBI" id="CHEBI:17319"/>
        <dbReference type="ChEBI" id="CHEBI:17499"/>
        <dbReference type="ChEBI" id="CHEBI:37565"/>
        <dbReference type="ChEBI" id="CHEBI:57844"/>
        <dbReference type="ChEBI" id="CHEBI:59789"/>
        <dbReference type="ChEBI" id="CHEBI:131766"/>
        <dbReference type="EC" id="4.1.99.22"/>
    </reaction>
</comment>
<comment type="cofactor">
    <cofactor evidence="1">
        <name>[4Fe-4S] cluster</name>
        <dbReference type="ChEBI" id="CHEBI:49883"/>
    </cofactor>
    <text evidence="1">Binds 2 [4Fe-4S] clusters. Binds 1 [4Fe-4S] cluster coordinated with 3 cysteines and an exchangeable S-adenosyl-L-methionine and 1 [4Fe-4S] cluster coordinated with 3 cysteines and the GTP-derived substrate.</text>
</comment>
<comment type="pathway">
    <text evidence="1">Cofactor biosynthesis; molybdopterin biosynthesis.</text>
</comment>
<comment type="subunit">
    <text evidence="1">Monomer and homodimer.</text>
</comment>
<comment type="similarity">
    <text evidence="1">Belongs to the radical SAM superfamily. MoaA family.</text>
</comment>
<comment type="sequence caution" evidence="3">
    <conflict type="erroneous initiation">
        <sequence resource="EMBL-CDS" id="SIU01984"/>
    </conflict>
    <text>Truncated N-terminus.</text>
</comment>
<dbReference type="EC" id="4.1.99.22" evidence="1"/>
<dbReference type="EMBL" id="LT708304">
    <property type="protein sequence ID" value="SIU01984.1"/>
    <property type="status" value="ALT_INIT"/>
    <property type="molecule type" value="Genomic_DNA"/>
</dbReference>
<dbReference type="RefSeq" id="NP_857000.1">
    <property type="nucleotide sequence ID" value="NC_002945.3"/>
</dbReference>
<dbReference type="SMR" id="P62588"/>
<dbReference type="KEGG" id="mbo:BQ2027_MB3355C"/>
<dbReference type="PATRIC" id="fig|233413.5.peg.3686"/>
<dbReference type="UniPathway" id="UPA00344"/>
<dbReference type="Proteomes" id="UP000001419">
    <property type="component" value="Chromosome"/>
</dbReference>
<dbReference type="GO" id="GO:0051539">
    <property type="term" value="F:4 iron, 4 sulfur cluster binding"/>
    <property type="evidence" value="ECO:0007669"/>
    <property type="project" value="UniProtKB-UniRule"/>
</dbReference>
<dbReference type="GO" id="GO:0061799">
    <property type="term" value="F:cyclic pyranopterin monophosphate synthase activity"/>
    <property type="evidence" value="ECO:0007669"/>
    <property type="project" value="TreeGrafter"/>
</dbReference>
<dbReference type="GO" id="GO:0061798">
    <property type="term" value="F:GTP 3',8'-cyclase activity"/>
    <property type="evidence" value="ECO:0007669"/>
    <property type="project" value="UniProtKB-UniRule"/>
</dbReference>
<dbReference type="GO" id="GO:0005525">
    <property type="term" value="F:GTP binding"/>
    <property type="evidence" value="ECO:0007669"/>
    <property type="project" value="UniProtKB-UniRule"/>
</dbReference>
<dbReference type="GO" id="GO:0046872">
    <property type="term" value="F:metal ion binding"/>
    <property type="evidence" value="ECO:0007669"/>
    <property type="project" value="UniProtKB-KW"/>
</dbReference>
<dbReference type="GO" id="GO:1904047">
    <property type="term" value="F:S-adenosyl-L-methionine binding"/>
    <property type="evidence" value="ECO:0007669"/>
    <property type="project" value="UniProtKB-UniRule"/>
</dbReference>
<dbReference type="GO" id="GO:0006777">
    <property type="term" value="P:Mo-molybdopterin cofactor biosynthetic process"/>
    <property type="evidence" value="ECO:0007669"/>
    <property type="project" value="UniProtKB-UniRule"/>
</dbReference>
<dbReference type="CDD" id="cd01335">
    <property type="entry name" value="Radical_SAM"/>
    <property type="match status" value="1"/>
</dbReference>
<dbReference type="CDD" id="cd21117">
    <property type="entry name" value="Twitch_MoaA"/>
    <property type="match status" value="1"/>
</dbReference>
<dbReference type="Gene3D" id="3.20.20.70">
    <property type="entry name" value="Aldolase class I"/>
    <property type="match status" value="1"/>
</dbReference>
<dbReference type="HAMAP" id="MF_01225_B">
    <property type="entry name" value="MoaA_B"/>
    <property type="match status" value="1"/>
</dbReference>
<dbReference type="InterPro" id="IPR013785">
    <property type="entry name" value="Aldolase_TIM"/>
</dbReference>
<dbReference type="InterPro" id="IPR006638">
    <property type="entry name" value="Elp3/MiaA/NifB-like_rSAM"/>
</dbReference>
<dbReference type="InterPro" id="IPR013483">
    <property type="entry name" value="MoaA"/>
</dbReference>
<dbReference type="InterPro" id="IPR000385">
    <property type="entry name" value="MoaA_NifB_PqqE_Fe-S-bd_CS"/>
</dbReference>
<dbReference type="InterPro" id="IPR010505">
    <property type="entry name" value="MoaA_twitch"/>
</dbReference>
<dbReference type="InterPro" id="IPR050105">
    <property type="entry name" value="MoCo_biosynth_MoaA/MoaC"/>
</dbReference>
<dbReference type="InterPro" id="IPR007197">
    <property type="entry name" value="rSAM"/>
</dbReference>
<dbReference type="NCBIfam" id="TIGR02666">
    <property type="entry name" value="moaA"/>
    <property type="match status" value="1"/>
</dbReference>
<dbReference type="PANTHER" id="PTHR22960:SF0">
    <property type="entry name" value="MOLYBDENUM COFACTOR BIOSYNTHESIS PROTEIN 1"/>
    <property type="match status" value="1"/>
</dbReference>
<dbReference type="PANTHER" id="PTHR22960">
    <property type="entry name" value="MOLYBDOPTERIN COFACTOR SYNTHESIS PROTEIN A"/>
    <property type="match status" value="1"/>
</dbReference>
<dbReference type="Pfam" id="PF06463">
    <property type="entry name" value="Mob_synth_C"/>
    <property type="match status" value="1"/>
</dbReference>
<dbReference type="Pfam" id="PF04055">
    <property type="entry name" value="Radical_SAM"/>
    <property type="match status" value="1"/>
</dbReference>
<dbReference type="SFLD" id="SFLDG01383">
    <property type="entry name" value="cyclic_pyranopterin_phosphate"/>
    <property type="match status" value="1"/>
</dbReference>
<dbReference type="SFLD" id="SFLDG01216">
    <property type="entry name" value="thioether_bond_formation_requi"/>
    <property type="match status" value="1"/>
</dbReference>
<dbReference type="SMART" id="SM00729">
    <property type="entry name" value="Elp3"/>
    <property type="match status" value="1"/>
</dbReference>
<dbReference type="SUPFAM" id="SSF102114">
    <property type="entry name" value="Radical SAM enzymes"/>
    <property type="match status" value="1"/>
</dbReference>
<dbReference type="PROSITE" id="PS01305">
    <property type="entry name" value="MOAA_NIFB_PQQE"/>
    <property type="match status" value="1"/>
</dbReference>
<dbReference type="PROSITE" id="PS51918">
    <property type="entry name" value="RADICAL_SAM"/>
    <property type="match status" value="1"/>
</dbReference>